<proteinExistence type="inferred from homology"/>
<protein>
    <recommendedName>
        <fullName evidence="1">Large ribosomal subunit protein bL9</fullName>
    </recommendedName>
    <alternativeName>
        <fullName evidence="2">50S ribosomal protein L9</fullName>
    </alternativeName>
</protein>
<comment type="function">
    <text evidence="1">Binds to the 23S rRNA.</text>
</comment>
<comment type="similarity">
    <text evidence="1">Belongs to the bacterial ribosomal protein bL9 family.</text>
</comment>
<name>RL9_GEOMG</name>
<gene>
    <name evidence="1" type="primary">rplI</name>
    <name type="ordered locus">Gmet_2841</name>
</gene>
<sequence length="148" mass="16184">MKVILKENLENLGHIGDIVKVAPGYARNYLLPRGYATEATEKNAKALEHAKRQLEYKRNKVLEQAKGLAAKIEGLTIAITHQAGEEGKLFGAVTNMELAEHLKAQGVEIDRKKIVLAEPIKHVGEYTASVKVHPEVAAALKVVITKAD</sequence>
<accession>Q39RR5</accession>
<dbReference type="EMBL" id="CP000148">
    <property type="protein sequence ID" value="ABB33059.1"/>
    <property type="molecule type" value="Genomic_DNA"/>
</dbReference>
<dbReference type="RefSeq" id="WP_004514575.1">
    <property type="nucleotide sequence ID" value="NC_007517.1"/>
</dbReference>
<dbReference type="SMR" id="Q39RR5"/>
<dbReference type="STRING" id="269799.Gmet_2841"/>
<dbReference type="KEGG" id="gme:Gmet_2841"/>
<dbReference type="eggNOG" id="COG0359">
    <property type="taxonomic scope" value="Bacteria"/>
</dbReference>
<dbReference type="HOGENOM" id="CLU_078938_3_0_7"/>
<dbReference type="Proteomes" id="UP000007073">
    <property type="component" value="Chromosome"/>
</dbReference>
<dbReference type="GO" id="GO:1990904">
    <property type="term" value="C:ribonucleoprotein complex"/>
    <property type="evidence" value="ECO:0007669"/>
    <property type="project" value="UniProtKB-KW"/>
</dbReference>
<dbReference type="GO" id="GO:0005840">
    <property type="term" value="C:ribosome"/>
    <property type="evidence" value="ECO:0007669"/>
    <property type="project" value="UniProtKB-KW"/>
</dbReference>
<dbReference type="GO" id="GO:0019843">
    <property type="term" value="F:rRNA binding"/>
    <property type="evidence" value="ECO:0007669"/>
    <property type="project" value="UniProtKB-UniRule"/>
</dbReference>
<dbReference type="GO" id="GO:0003735">
    <property type="term" value="F:structural constituent of ribosome"/>
    <property type="evidence" value="ECO:0007669"/>
    <property type="project" value="InterPro"/>
</dbReference>
<dbReference type="GO" id="GO:0006412">
    <property type="term" value="P:translation"/>
    <property type="evidence" value="ECO:0007669"/>
    <property type="project" value="UniProtKB-UniRule"/>
</dbReference>
<dbReference type="FunFam" id="3.10.430.100:FF:000006">
    <property type="entry name" value="50S ribosomal protein L9"/>
    <property type="match status" value="1"/>
</dbReference>
<dbReference type="FunFam" id="3.40.5.10:FF:000002">
    <property type="entry name" value="50S ribosomal protein L9"/>
    <property type="match status" value="1"/>
</dbReference>
<dbReference type="Gene3D" id="3.10.430.100">
    <property type="entry name" value="Ribosomal protein L9, C-terminal domain"/>
    <property type="match status" value="1"/>
</dbReference>
<dbReference type="Gene3D" id="3.40.5.10">
    <property type="entry name" value="Ribosomal protein L9, N-terminal domain"/>
    <property type="match status" value="1"/>
</dbReference>
<dbReference type="HAMAP" id="MF_00503">
    <property type="entry name" value="Ribosomal_bL9"/>
    <property type="match status" value="1"/>
</dbReference>
<dbReference type="InterPro" id="IPR000244">
    <property type="entry name" value="Ribosomal_bL9"/>
</dbReference>
<dbReference type="InterPro" id="IPR009027">
    <property type="entry name" value="Ribosomal_bL9/RNase_H1_N"/>
</dbReference>
<dbReference type="InterPro" id="IPR020594">
    <property type="entry name" value="Ribosomal_bL9_bac/chp"/>
</dbReference>
<dbReference type="InterPro" id="IPR020069">
    <property type="entry name" value="Ribosomal_bL9_C"/>
</dbReference>
<dbReference type="InterPro" id="IPR036791">
    <property type="entry name" value="Ribosomal_bL9_C_sf"/>
</dbReference>
<dbReference type="InterPro" id="IPR020070">
    <property type="entry name" value="Ribosomal_bL9_N"/>
</dbReference>
<dbReference type="InterPro" id="IPR036935">
    <property type="entry name" value="Ribosomal_bL9_N_sf"/>
</dbReference>
<dbReference type="NCBIfam" id="TIGR00158">
    <property type="entry name" value="L9"/>
    <property type="match status" value="1"/>
</dbReference>
<dbReference type="PANTHER" id="PTHR21368">
    <property type="entry name" value="50S RIBOSOMAL PROTEIN L9"/>
    <property type="match status" value="1"/>
</dbReference>
<dbReference type="Pfam" id="PF03948">
    <property type="entry name" value="Ribosomal_L9_C"/>
    <property type="match status" value="1"/>
</dbReference>
<dbReference type="Pfam" id="PF01281">
    <property type="entry name" value="Ribosomal_L9_N"/>
    <property type="match status" value="1"/>
</dbReference>
<dbReference type="SUPFAM" id="SSF55658">
    <property type="entry name" value="L9 N-domain-like"/>
    <property type="match status" value="1"/>
</dbReference>
<dbReference type="SUPFAM" id="SSF55653">
    <property type="entry name" value="Ribosomal protein L9 C-domain"/>
    <property type="match status" value="1"/>
</dbReference>
<dbReference type="PROSITE" id="PS00651">
    <property type="entry name" value="RIBOSOMAL_L9"/>
    <property type="match status" value="1"/>
</dbReference>
<feature type="chain" id="PRO_0000236526" description="Large ribosomal subunit protein bL9">
    <location>
        <begin position="1"/>
        <end position="148"/>
    </location>
</feature>
<evidence type="ECO:0000255" key="1">
    <source>
        <dbReference type="HAMAP-Rule" id="MF_00503"/>
    </source>
</evidence>
<evidence type="ECO:0000305" key="2"/>
<keyword id="KW-1185">Reference proteome</keyword>
<keyword id="KW-0687">Ribonucleoprotein</keyword>
<keyword id="KW-0689">Ribosomal protein</keyword>
<keyword id="KW-0694">RNA-binding</keyword>
<keyword id="KW-0699">rRNA-binding</keyword>
<reference key="1">
    <citation type="journal article" date="2009" name="BMC Microbiol.">
        <title>The genome sequence of Geobacter metallireducens: features of metabolism, physiology and regulation common and dissimilar to Geobacter sulfurreducens.</title>
        <authorList>
            <person name="Aklujkar M."/>
            <person name="Krushkal J."/>
            <person name="DiBartolo G."/>
            <person name="Lapidus A."/>
            <person name="Land M.L."/>
            <person name="Lovley D.R."/>
        </authorList>
    </citation>
    <scope>NUCLEOTIDE SEQUENCE [LARGE SCALE GENOMIC DNA]</scope>
    <source>
        <strain>ATCC 53774 / DSM 7210 / GS-15</strain>
    </source>
</reference>
<organism>
    <name type="scientific">Geobacter metallireducens (strain ATCC 53774 / DSM 7210 / GS-15)</name>
    <dbReference type="NCBI Taxonomy" id="269799"/>
    <lineage>
        <taxon>Bacteria</taxon>
        <taxon>Pseudomonadati</taxon>
        <taxon>Thermodesulfobacteriota</taxon>
        <taxon>Desulfuromonadia</taxon>
        <taxon>Geobacterales</taxon>
        <taxon>Geobacteraceae</taxon>
        <taxon>Geobacter</taxon>
    </lineage>
</organism>